<dbReference type="EC" id="2.7.1.-" evidence="1"/>
<dbReference type="EMBL" id="CP000046">
    <property type="protein sequence ID" value="AAW37474.1"/>
    <property type="molecule type" value="Genomic_DNA"/>
</dbReference>
<dbReference type="RefSeq" id="WP_000159750.1">
    <property type="nucleotide sequence ID" value="NZ_JBGOFO010000001.1"/>
</dbReference>
<dbReference type="SMR" id="Q5HJI0"/>
<dbReference type="KEGG" id="sac:SACOL0178"/>
<dbReference type="HOGENOM" id="CLU_012312_2_0_9"/>
<dbReference type="UniPathway" id="UPA00544"/>
<dbReference type="Proteomes" id="UP000000530">
    <property type="component" value="Chromosome"/>
</dbReference>
<dbReference type="GO" id="GO:0005886">
    <property type="term" value="C:plasma membrane"/>
    <property type="evidence" value="ECO:0007669"/>
    <property type="project" value="UniProtKB-SubCell"/>
</dbReference>
<dbReference type="GO" id="GO:0016301">
    <property type="term" value="F:kinase activity"/>
    <property type="evidence" value="ECO:0007669"/>
    <property type="project" value="UniProtKB-KW"/>
</dbReference>
<dbReference type="GO" id="GO:0008982">
    <property type="term" value="F:protein-N(PI)-phosphohistidine-sugar phosphotransferase activity"/>
    <property type="evidence" value="ECO:0007669"/>
    <property type="project" value="InterPro"/>
</dbReference>
<dbReference type="GO" id="GO:0090588">
    <property type="term" value="F:protein-phosphocysteine-N-acetylmuramate phosphotransferase system transporter activity"/>
    <property type="evidence" value="ECO:0007669"/>
    <property type="project" value="TreeGrafter"/>
</dbReference>
<dbReference type="GO" id="GO:0009254">
    <property type="term" value="P:peptidoglycan turnover"/>
    <property type="evidence" value="ECO:0007669"/>
    <property type="project" value="UniProtKB-UniPathway"/>
</dbReference>
<dbReference type="GO" id="GO:0009401">
    <property type="term" value="P:phosphoenolpyruvate-dependent sugar phosphotransferase system"/>
    <property type="evidence" value="ECO:0007669"/>
    <property type="project" value="UniProtKB-KW"/>
</dbReference>
<dbReference type="CDD" id="cd00212">
    <property type="entry name" value="PTS_IIB_glc"/>
    <property type="match status" value="1"/>
</dbReference>
<dbReference type="FunFam" id="3.30.1360.60:FF:000001">
    <property type="entry name" value="PTS system glucose-specific IIBC component PtsG"/>
    <property type="match status" value="1"/>
</dbReference>
<dbReference type="Gene3D" id="3.30.1360.60">
    <property type="entry name" value="Glucose permease domain IIB"/>
    <property type="match status" value="1"/>
</dbReference>
<dbReference type="InterPro" id="IPR036878">
    <property type="entry name" value="Glu_permease_IIB"/>
</dbReference>
<dbReference type="InterPro" id="IPR018113">
    <property type="entry name" value="PTrfase_EIIB_Cys"/>
</dbReference>
<dbReference type="InterPro" id="IPR003352">
    <property type="entry name" value="PTS_EIIC"/>
</dbReference>
<dbReference type="InterPro" id="IPR013013">
    <property type="entry name" value="PTS_EIIC_1"/>
</dbReference>
<dbReference type="InterPro" id="IPR001996">
    <property type="entry name" value="PTS_IIB_1"/>
</dbReference>
<dbReference type="InterPro" id="IPR050558">
    <property type="entry name" value="PTS_Sugar-Specific_Components"/>
</dbReference>
<dbReference type="PANTHER" id="PTHR30175">
    <property type="entry name" value="PHOSPHOTRANSFERASE SYSTEM TRANSPORT PROTEIN"/>
    <property type="match status" value="1"/>
</dbReference>
<dbReference type="PANTHER" id="PTHR30175:SF3">
    <property type="entry name" value="PTS SYSTEM N-ACETYLMURAMIC ACID-SPECIFIC EIIBC COMPONENT"/>
    <property type="match status" value="1"/>
</dbReference>
<dbReference type="Pfam" id="PF00367">
    <property type="entry name" value="PTS_EIIB"/>
    <property type="match status" value="1"/>
</dbReference>
<dbReference type="Pfam" id="PF02378">
    <property type="entry name" value="PTS_EIIC"/>
    <property type="match status" value="1"/>
</dbReference>
<dbReference type="SUPFAM" id="SSF55604">
    <property type="entry name" value="Glucose permease domain IIB"/>
    <property type="match status" value="1"/>
</dbReference>
<dbReference type="PROSITE" id="PS51098">
    <property type="entry name" value="PTS_EIIB_TYPE_1"/>
    <property type="match status" value="1"/>
</dbReference>
<dbReference type="PROSITE" id="PS01035">
    <property type="entry name" value="PTS_EIIB_TYPE_1_CYS"/>
    <property type="match status" value="1"/>
</dbReference>
<dbReference type="PROSITE" id="PS51103">
    <property type="entry name" value="PTS_EIIC_TYPE_1"/>
    <property type="match status" value="1"/>
</dbReference>
<reference key="1">
    <citation type="journal article" date="2005" name="J. Bacteriol.">
        <title>Insights on evolution of virulence and resistance from the complete genome analysis of an early methicillin-resistant Staphylococcus aureus strain and a biofilm-producing methicillin-resistant Staphylococcus epidermidis strain.</title>
        <authorList>
            <person name="Gill S.R."/>
            <person name="Fouts D.E."/>
            <person name="Archer G.L."/>
            <person name="Mongodin E.F."/>
            <person name="DeBoy R.T."/>
            <person name="Ravel J."/>
            <person name="Paulsen I.T."/>
            <person name="Kolonay J.F."/>
            <person name="Brinkac L.M."/>
            <person name="Beanan M.J."/>
            <person name="Dodson R.J."/>
            <person name="Daugherty S.C."/>
            <person name="Madupu R."/>
            <person name="Angiuoli S.V."/>
            <person name="Durkin A.S."/>
            <person name="Haft D.H."/>
            <person name="Vamathevan J.J."/>
            <person name="Khouri H."/>
            <person name="Utterback T.R."/>
            <person name="Lee C."/>
            <person name="Dimitrov G."/>
            <person name="Jiang L."/>
            <person name="Qin H."/>
            <person name="Weidman J."/>
            <person name="Tran K."/>
            <person name="Kang K.H."/>
            <person name="Hance I.R."/>
            <person name="Nelson K.E."/>
            <person name="Fraser C.M."/>
        </authorList>
    </citation>
    <scope>NUCLEOTIDE SEQUENCE [LARGE SCALE GENOMIC DNA]</scope>
    <source>
        <strain>COL</strain>
    </source>
</reference>
<comment type="function">
    <text evidence="1">The phosphoenolpyruvate-dependent sugar phosphotransferase system (sugar PTS), a major carbohydrate active transport system, catalyzes the phosphorylation of incoming sugar substrates concomitantly with their translocation across the cell membrane. This system is involved in the uptake and phosphorylation of MurNAc-GlcNAc, the principle peptidoglycan turnover product of S.aureus, yielding cytoplasmic MurNAc 6P-GlcNAc.</text>
</comment>
<comment type="catalytic activity">
    <reaction evidence="1">
        <text>N-acetyl-beta-D-muramate-(1-&gt;4)-N-acetyl-D-glucosamine(out) + N(pros)-phospho-L-histidyl-[protein] = 6-phospho-N-acetyl-beta-D-muramate-(1-&gt;4)-N-acetyl-D-glucosamine(in) + L-histidyl-[protein]</text>
        <dbReference type="Rhea" id="RHEA:66784"/>
        <dbReference type="Rhea" id="RHEA-COMP:9745"/>
        <dbReference type="Rhea" id="RHEA-COMP:9746"/>
        <dbReference type="ChEBI" id="CHEBI:29979"/>
        <dbReference type="ChEBI" id="CHEBI:64837"/>
        <dbReference type="ChEBI" id="CHEBI:167476"/>
        <dbReference type="ChEBI" id="CHEBI:167477"/>
    </reaction>
    <physiologicalReaction direction="left-to-right" evidence="1">
        <dbReference type="Rhea" id="RHEA:66785"/>
    </physiologicalReaction>
</comment>
<comment type="pathway">
    <text evidence="1">Cell wall biogenesis; peptidoglycan recycling.</text>
</comment>
<comment type="subcellular location">
    <subcellularLocation>
        <location evidence="3">Cell membrane</location>
        <topology evidence="3">Multi-pass membrane protein</topology>
    </subcellularLocation>
</comment>
<comment type="domain">
    <text>The EIIB domain is phosphorylated by phospho-EIIA on a cysteinyl or histidyl residue, depending on the transported sugar. Then, it transfers the phosphoryl group to the sugar substrate concomitantly with the sugar uptake processed by the EIIC domain.</text>
</comment>
<comment type="domain">
    <text>The EIIC domain forms the PTS system translocation channel and contains the specific substrate-binding site.</text>
</comment>
<sequence length="484" mass="50665">MTKEQQLAERIIAAVGGMDNIDSVMNCMTRVRIKVLDENKVDDQELRHIDGVMGVIHDERIQVVVGPGTVNKVANHMAELSGVKLGDPIPHHHNDSEKMDYKSYAADKAKANKEAHKAKQKNGKLNKVLKSIANIFIPLIPAFIGAGLIGGIAAVLSNLMVAGYISGAWITQLITVFNVIKDGMLAYLAIFTGINAAKEFGATPGLGGVIGGTTLLTGIAGKNILMNVFTGEPLQPGQGGIIGVIFAVWILSIVEKRLHKIVPNAIDIIVTPTIALLIVGLLTIFIFMPLAGFVSDSLVSVVNGIISIGGVFSGFIIGASFLPLVMLGLHHIFTPIHIEMINQSGATYLLPIAAMAGAGQVGAALALWVRCKRNTTLRNTLKGALPVGFLGIGEPLIYGVTLPLGRPFLTACIGGGIGGAVIGGIGHIGAKAIGPSGVSLLPLISDNMYLGYIAGLLAAYAGGFVCTYLFGTTKAMRQTDLLGD</sequence>
<name>PTXBC_STAAC</name>
<accession>Q5HJI0</accession>
<keyword id="KW-1003">Cell membrane</keyword>
<keyword id="KW-0418">Kinase</keyword>
<keyword id="KW-0472">Membrane</keyword>
<keyword id="KW-0598">Phosphotransferase system</keyword>
<keyword id="KW-0762">Sugar transport</keyword>
<keyword id="KW-0808">Transferase</keyword>
<keyword id="KW-0812">Transmembrane</keyword>
<keyword id="KW-1133">Transmembrane helix</keyword>
<keyword id="KW-0813">Transport</keyword>
<protein>
    <recommendedName>
        <fullName evidence="1">PTS system MurNAc-GlcNAc-specific EIIBC component</fullName>
    </recommendedName>
    <domain>
        <recommendedName>
            <fullName>MurNAc-GlcNAc-specific phosphotransferase enzyme IIB component</fullName>
            <ecNumber evidence="1">2.7.1.-</ecNumber>
        </recommendedName>
        <alternativeName>
            <fullName>PTS system MurNAc-GlcNAc-specific EIIB component</fullName>
        </alternativeName>
    </domain>
    <domain>
        <recommendedName>
            <fullName>MurNAc-GlcNAc permease IIC component</fullName>
        </recommendedName>
        <alternativeName>
            <fullName>PTS system MurNAc-GlcNAc-specific EIIC component</fullName>
        </alternativeName>
    </domain>
</protein>
<organism>
    <name type="scientific">Staphylococcus aureus (strain COL)</name>
    <dbReference type="NCBI Taxonomy" id="93062"/>
    <lineage>
        <taxon>Bacteria</taxon>
        <taxon>Bacillati</taxon>
        <taxon>Bacillota</taxon>
        <taxon>Bacilli</taxon>
        <taxon>Bacillales</taxon>
        <taxon>Staphylococcaceae</taxon>
        <taxon>Staphylococcus</taxon>
    </lineage>
</organism>
<feature type="chain" id="PRO_0000272175" description="PTS system MurNAc-GlcNAc-specific EIIBC component">
    <location>
        <begin position="1"/>
        <end position="484"/>
    </location>
</feature>
<feature type="transmembrane region" description="Helical" evidence="3">
    <location>
        <begin position="135"/>
        <end position="155"/>
    </location>
</feature>
<feature type="transmembrane region" description="Helical" evidence="3">
    <location>
        <begin position="160"/>
        <end position="180"/>
    </location>
</feature>
<feature type="transmembrane region" description="Helical" evidence="3">
    <location>
        <begin position="200"/>
        <end position="220"/>
    </location>
</feature>
<feature type="transmembrane region" description="Helical" evidence="3">
    <location>
        <begin position="234"/>
        <end position="254"/>
    </location>
</feature>
<feature type="transmembrane region" description="Helical" evidence="3">
    <location>
        <begin position="274"/>
        <end position="294"/>
    </location>
</feature>
<feature type="transmembrane region" description="Helical" evidence="3">
    <location>
        <begin position="305"/>
        <end position="325"/>
    </location>
</feature>
<feature type="transmembrane region" description="Helical" evidence="3">
    <location>
        <begin position="349"/>
        <end position="369"/>
    </location>
</feature>
<feature type="transmembrane region" description="Helical" evidence="3">
    <location>
        <begin position="384"/>
        <end position="404"/>
    </location>
</feature>
<feature type="transmembrane region" description="Helical" evidence="3">
    <location>
        <begin position="408"/>
        <end position="428"/>
    </location>
</feature>
<feature type="transmembrane region" description="Helical" evidence="3">
    <location>
        <begin position="450"/>
        <end position="470"/>
    </location>
</feature>
<feature type="domain" description="PTS EIIB type-1" evidence="2">
    <location>
        <begin position="5"/>
        <end position="87"/>
    </location>
</feature>
<feature type="domain" description="PTS EIIC type-1" evidence="3">
    <location>
        <begin position="130"/>
        <end position="484"/>
    </location>
</feature>
<feature type="active site" description="Phosphocysteine intermediate; for EIIB activity" evidence="2">
    <location>
        <position position="27"/>
    </location>
</feature>
<proteinExistence type="inferred from homology"/>
<gene>
    <name type="ordered locus">SACOL0178</name>
</gene>
<evidence type="ECO:0000250" key="1">
    <source>
        <dbReference type="UniProtKB" id="Q2FK70"/>
    </source>
</evidence>
<evidence type="ECO:0000255" key="2">
    <source>
        <dbReference type="PROSITE-ProRule" id="PRU00421"/>
    </source>
</evidence>
<evidence type="ECO:0000255" key="3">
    <source>
        <dbReference type="PROSITE-ProRule" id="PRU00426"/>
    </source>
</evidence>